<organism>
    <name type="scientific">Draba nemorosa</name>
    <name type="common">Woodland whitlowgrass</name>
    <dbReference type="NCBI Taxonomy" id="171822"/>
    <lineage>
        <taxon>Eukaryota</taxon>
        <taxon>Viridiplantae</taxon>
        <taxon>Streptophyta</taxon>
        <taxon>Embryophyta</taxon>
        <taxon>Tracheophyta</taxon>
        <taxon>Spermatophyta</taxon>
        <taxon>Magnoliopsida</taxon>
        <taxon>eudicotyledons</taxon>
        <taxon>Gunneridae</taxon>
        <taxon>Pentapetalae</taxon>
        <taxon>rosids</taxon>
        <taxon>malvids</taxon>
        <taxon>Brassicales</taxon>
        <taxon>Brassicaceae</taxon>
        <taxon>Arabideae</taxon>
        <taxon>Draba</taxon>
    </lineage>
</organism>
<name>RR4_DRANE</name>
<keyword id="KW-0150">Chloroplast</keyword>
<keyword id="KW-0934">Plastid</keyword>
<keyword id="KW-0687">Ribonucleoprotein</keyword>
<keyword id="KW-0689">Ribosomal protein</keyword>
<keyword id="KW-0694">RNA-binding</keyword>
<keyword id="KW-0699">rRNA-binding</keyword>
<gene>
    <name type="primary">rps4</name>
</gene>
<accession>A4QL21</accession>
<sequence length="201" mass="23247">MSRYRGPRFKKIRRLGALPGLTSKRPRAGSDPRNQSRSGKKSQYRIRLEEKQKLRFHYGLTERQLLKYVRIAGKAKGSTGQVLLQLLEMRLDNTLFRLGMALTIPQARQLVNHGHILVNGRIVDIPSYRCKPRDIITVKDEQNSRTLVQNLLDSSTPEELPNHLTLHTFQYEGLVNQIIDRKCVGLKINELLVVEYYSRQT</sequence>
<reference key="1">
    <citation type="submission" date="2007-03" db="EMBL/GenBank/DDBJ databases">
        <title>Sequencing analysis of Draba nemoroza chloroplast DNA.</title>
        <authorList>
            <person name="Hosouchi T."/>
            <person name="Tsuruoka H."/>
            <person name="Kotani H."/>
        </authorList>
    </citation>
    <scope>NUCLEOTIDE SEQUENCE [LARGE SCALE GENOMIC DNA]</scope>
</reference>
<protein>
    <recommendedName>
        <fullName evidence="3">Small ribosomal subunit protein uS4c</fullName>
    </recommendedName>
    <alternativeName>
        <fullName>30S ribosomal protein S4, chloroplastic</fullName>
    </alternativeName>
</protein>
<proteinExistence type="inferred from homology"/>
<dbReference type="EMBL" id="AP009373">
    <property type="protein sequence ID" value="BAF50376.1"/>
    <property type="molecule type" value="Genomic_DNA"/>
</dbReference>
<dbReference type="RefSeq" id="YP_001123552.1">
    <property type="nucleotide sequence ID" value="NC_009272.1"/>
</dbReference>
<dbReference type="SMR" id="A4QL21"/>
<dbReference type="GeneID" id="4964794"/>
<dbReference type="GO" id="GO:0009507">
    <property type="term" value="C:chloroplast"/>
    <property type="evidence" value="ECO:0007669"/>
    <property type="project" value="UniProtKB-SubCell"/>
</dbReference>
<dbReference type="GO" id="GO:0015935">
    <property type="term" value="C:small ribosomal subunit"/>
    <property type="evidence" value="ECO:0007669"/>
    <property type="project" value="InterPro"/>
</dbReference>
<dbReference type="GO" id="GO:0019843">
    <property type="term" value="F:rRNA binding"/>
    <property type="evidence" value="ECO:0007669"/>
    <property type="project" value="UniProtKB-UniRule"/>
</dbReference>
<dbReference type="GO" id="GO:0003735">
    <property type="term" value="F:structural constituent of ribosome"/>
    <property type="evidence" value="ECO:0007669"/>
    <property type="project" value="InterPro"/>
</dbReference>
<dbReference type="GO" id="GO:0042274">
    <property type="term" value="P:ribosomal small subunit biogenesis"/>
    <property type="evidence" value="ECO:0007669"/>
    <property type="project" value="TreeGrafter"/>
</dbReference>
<dbReference type="GO" id="GO:0006412">
    <property type="term" value="P:translation"/>
    <property type="evidence" value="ECO:0007669"/>
    <property type="project" value="UniProtKB-UniRule"/>
</dbReference>
<dbReference type="CDD" id="cd00165">
    <property type="entry name" value="S4"/>
    <property type="match status" value="1"/>
</dbReference>
<dbReference type="FunFam" id="1.10.1050.10:FF:000002">
    <property type="entry name" value="30S ribosomal protein S4, chloroplastic"/>
    <property type="match status" value="1"/>
</dbReference>
<dbReference type="FunFam" id="3.10.290.10:FF:000081">
    <property type="entry name" value="30S ribosomal protein S4, chloroplastic"/>
    <property type="match status" value="1"/>
</dbReference>
<dbReference type="Gene3D" id="1.10.1050.10">
    <property type="entry name" value="Ribosomal Protein S4 Delta 41, Chain A, domain 1"/>
    <property type="match status" value="1"/>
</dbReference>
<dbReference type="Gene3D" id="3.10.290.10">
    <property type="entry name" value="RNA-binding S4 domain"/>
    <property type="match status" value="1"/>
</dbReference>
<dbReference type="HAMAP" id="MF_01306_B">
    <property type="entry name" value="Ribosomal_uS4_B"/>
    <property type="match status" value="1"/>
</dbReference>
<dbReference type="InterPro" id="IPR022801">
    <property type="entry name" value="Ribosomal_uS4"/>
</dbReference>
<dbReference type="InterPro" id="IPR005709">
    <property type="entry name" value="Ribosomal_uS4_bac-type"/>
</dbReference>
<dbReference type="InterPro" id="IPR018079">
    <property type="entry name" value="Ribosomal_uS4_CS"/>
</dbReference>
<dbReference type="InterPro" id="IPR001912">
    <property type="entry name" value="Ribosomal_uS4_N"/>
</dbReference>
<dbReference type="InterPro" id="IPR002942">
    <property type="entry name" value="S4_RNA-bd"/>
</dbReference>
<dbReference type="InterPro" id="IPR036986">
    <property type="entry name" value="S4_RNA-bd_sf"/>
</dbReference>
<dbReference type="NCBIfam" id="NF003717">
    <property type="entry name" value="PRK05327.1"/>
    <property type="match status" value="1"/>
</dbReference>
<dbReference type="NCBIfam" id="TIGR01017">
    <property type="entry name" value="rpsD_bact"/>
    <property type="match status" value="1"/>
</dbReference>
<dbReference type="PANTHER" id="PTHR11831">
    <property type="entry name" value="30S 40S RIBOSOMAL PROTEIN"/>
    <property type="match status" value="1"/>
</dbReference>
<dbReference type="PANTHER" id="PTHR11831:SF4">
    <property type="entry name" value="SMALL RIBOSOMAL SUBUNIT PROTEIN US4M"/>
    <property type="match status" value="1"/>
</dbReference>
<dbReference type="Pfam" id="PF00163">
    <property type="entry name" value="Ribosomal_S4"/>
    <property type="match status" value="1"/>
</dbReference>
<dbReference type="Pfam" id="PF01479">
    <property type="entry name" value="S4"/>
    <property type="match status" value="1"/>
</dbReference>
<dbReference type="SMART" id="SM01390">
    <property type="entry name" value="Ribosomal_S4"/>
    <property type="match status" value="1"/>
</dbReference>
<dbReference type="SMART" id="SM00363">
    <property type="entry name" value="S4"/>
    <property type="match status" value="1"/>
</dbReference>
<dbReference type="SUPFAM" id="SSF55174">
    <property type="entry name" value="Alpha-L RNA-binding motif"/>
    <property type="match status" value="1"/>
</dbReference>
<dbReference type="PROSITE" id="PS00632">
    <property type="entry name" value="RIBOSOMAL_S4"/>
    <property type="match status" value="1"/>
</dbReference>
<dbReference type="PROSITE" id="PS50889">
    <property type="entry name" value="S4"/>
    <property type="match status" value="1"/>
</dbReference>
<evidence type="ECO:0000250" key="1"/>
<evidence type="ECO:0000256" key="2">
    <source>
        <dbReference type="SAM" id="MobiDB-lite"/>
    </source>
</evidence>
<evidence type="ECO:0000305" key="3"/>
<feature type="chain" id="PRO_0000293426" description="Small ribosomal subunit protein uS4c">
    <location>
        <begin position="1"/>
        <end position="201"/>
    </location>
</feature>
<feature type="domain" description="S4 RNA-binding">
    <location>
        <begin position="89"/>
        <end position="152"/>
    </location>
</feature>
<feature type="region of interest" description="Disordered" evidence="2">
    <location>
        <begin position="1"/>
        <end position="44"/>
    </location>
</feature>
<feature type="compositionally biased region" description="Basic residues" evidence="2">
    <location>
        <begin position="1"/>
        <end position="14"/>
    </location>
</feature>
<geneLocation type="chloroplast"/>
<comment type="function">
    <text evidence="1">One of the primary rRNA binding proteins, it binds directly to 16S rRNA where it nucleates assembly of the body of the 30S subunit.</text>
</comment>
<comment type="function">
    <text evidence="1">With S5 and S12 plays an important role in translational accuracy.</text>
</comment>
<comment type="subunit">
    <text evidence="1">Part of the 30S ribosomal subunit. Contacts protein S5. The interaction surface between S4 and S5 is involved in control of translational fidelity (By similarity).</text>
</comment>
<comment type="subcellular location">
    <subcellularLocation>
        <location>Plastid</location>
        <location>Chloroplast</location>
    </subcellularLocation>
</comment>
<comment type="similarity">
    <text evidence="3">Belongs to the universal ribosomal protein uS4 family.</text>
</comment>